<keyword id="KW-0687">Ribonucleoprotein</keyword>
<keyword id="KW-0689">Ribosomal protein</keyword>
<keyword id="KW-0694">RNA-binding</keyword>
<keyword id="KW-0699">rRNA-binding</keyword>
<keyword id="KW-0820">tRNA-binding</keyword>
<proteinExistence type="inferred from homology"/>
<gene>
    <name evidence="1" type="primary">rpsM</name>
    <name type="ordered locus">CLD_1050</name>
</gene>
<name>RS13_CLOBK</name>
<organism>
    <name type="scientific">Clostridium botulinum (strain Okra / Type B1)</name>
    <dbReference type="NCBI Taxonomy" id="498213"/>
    <lineage>
        <taxon>Bacteria</taxon>
        <taxon>Bacillati</taxon>
        <taxon>Bacillota</taxon>
        <taxon>Clostridia</taxon>
        <taxon>Eubacteriales</taxon>
        <taxon>Clostridiaceae</taxon>
        <taxon>Clostridium</taxon>
    </lineage>
</organism>
<comment type="function">
    <text evidence="1">Located at the top of the head of the 30S subunit, it contacts several helices of the 16S rRNA. In the 70S ribosome it contacts the 23S rRNA (bridge B1a) and protein L5 of the 50S subunit (bridge B1b), connecting the 2 subunits; these bridges are implicated in subunit movement. Contacts the tRNAs in the A and P-sites.</text>
</comment>
<comment type="subunit">
    <text evidence="1">Part of the 30S ribosomal subunit. Forms a loose heterodimer with protein S19. Forms two bridges to the 50S subunit in the 70S ribosome.</text>
</comment>
<comment type="similarity">
    <text evidence="1">Belongs to the universal ribosomal protein uS13 family.</text>
</comment>
<protein>
    <recommendedName>
        <fullName evidence="1">Small ribosomal subunit protein uS13</fullName>
    </recommendedName>
    <alternativeName>
        <fullName evidence="3">30S ribosomal protein S13</fullName>
    </alternativeName>
</protein>
<sequence length="123" mass="13975">MARISGIDLPKEKRVEIGLTYIYGIGLPTSQEILKATGVNPDTRVKDLSEEEVNAIRDYVNKNVKVEGDLRREIKLNIKRLVEIGSYRGIRHRRNLPVRGQKTKTNARTRKGPKRAIGGKKKK</sequence>
<accession>B1IGC8</accession>
<reference key="1">
    <citation type="journal article" date="2007" name="PLoS ONE">
        <title>Analysis of the neurotoxin complex genes in Clostridium botulinum A1-A4 and B1 strains: BoNT/A3, /Ba4 and /B1 clusters are located within plasmids.</title>
        <authorList>
            <person name="Smith T.J."/>
            <person name="Hill K.K."/>
            <person name="Foley B.T."/>
            <person name="Detter J.C."/>
            <person name="Munk A.C."/>
            <person name="Bruce D.C."/>
            <person name="Doggett N.A."/>
            <person name="Smith L.A."/>
            <person name="Marks J.D."/>
            <person name="Xie G."/>
            <person name="Brettin T.S."/>
        </authorList>
    </citation>
    <scope>NUCLEOTIDE SEQUENCE [LARGE SCALE GENOMIC DNA]</scope>
    <source>
        <strain>Okra / Type B1</strain>
    </source>
</reference>
<dbReference type="EMBL" id="CP000939">
    <property type="protein sequence ID" value="ACA46262.1"/>
    <property type="molecule type" value="Genomic_DNA"/>
</dbReference>
<dbReference type="RefSeq" id="WP_003357564.1">
    <property type="nucleotide sequence ID" value="NC_010516.1"/>
</dbReference>
<dbReference type="SMR" id="B1IGC8"/>
<dbReference type="GeneID" id="92940224"/>
<dbReference type="KEGG" id="cbb:CLD_1050"/>
<dbReference type="HOGENOM" id="CLU_103849_1_2_9"/>
<dbReference type="Proteomes" id="UP000008541">
    <property type="component" value="Chromosome"/>
</dbReference>
<dbReference type="GO" id="GO:0005829">
    <property type="term" value="C:cytosol"/>
    <property type="evidence" value="ECO:0007669"/>
    <property type="project" value="TreeGrafter"/>
</dbReference>
<dbReference type="GO" id="GO:0015935">
    <property type="term" value="C:small ribosomal subunit"/>
    <property type="evidence" value="ECO:0007669"/>
    <property type="project" value="TreeGrafter"/>
</dbReference>
<dbReference type="GO" id="GO:0019843">
    <property type="term" value="F:rRNA binding"/>
    <property type="evidence" value="ECO:0007669"/>
    <property type="project" value="UniProtKB-UniRule"/>
</dbReference>
<dbReference type="GO" id="GO:0003735">
    <property type="term" value="F:structural constituent of ribosome"/>
    <property type="evidence" value="ECO:0007669"/>
    <property type="project" value="InterPro"/>
</dbReference>
<dbReference type="GO" id="GO:0000049">
    <property type="term" value="F:tRNA binding"/>
    <property type="evidence" value="ECO:0007669"/>
    <property type="project" value="UniProtKB-UniRule"/>
</dbReference>
<dbReference type="GO" id="GO:0006412">
    <property type="term" value="P:translation"/>
    <property type="evidence" value="ECO:0007669"/>
    <property type="project" value="UniProtKB-UniRule"/>
</dbReference>
<dbReference type="FunFam" id="1.10.8.50:FF:000001">
    <property type="entry name" value="30S ribosomal protein S13"/>
    <property type="match status" value="1"/>
</dbReference>
<dbReference type="FunFam" id="4.10.910.10:FF:000001">
    <property type="entry name" value="30S ribosomal protein S13"/>
    <property type="match status" value="1"/>
</dbReference>
<dbReference type="Gene3D" id="1.10.8.50">
    <property type="match status" value="1"/>
</dbReference>
<dbReference type="Gene3D" id="4.10.910.10">
    <property type="entry name" value="30s ribosomal protein s13, domain 2"/>
    <property type="match status" value="1"/>
</dbReference>
<dbReference type="HAMAP" id="MF_01315">
    <property type="entry name" value="Ribosomal_uS13"/>
    <property type="match status" value="1"/>
</dbReference>
<dbReference type="InterPro" id="IPR027437">
    <property type="entry name" value="Rbsml_uS13_C"/>
</dbReference>
<dbReference type="InterPro" id="IPR001892">
    <property type="entry name" value="Ribosomal_uS13"/>
</dbReference>
<dbReference type="InterPro" id="IPR010979">
    <property type="entry name" value="Ribosomal_uS13-like_H2TH"/>
</dbReference>
<dbReference type="InterPro" id="IPR019980">
    <property type="entry name" value="Ribosomal_uS13_bac-type"/>
</dbReference>
<dbReference type="InterPro" id="IPR018269">
    <property type="entry name" value="Ribosomal_uS13_CS"/>
</dbReference>
<dbReference type="NCBIfam" id="TIGR03631">
    <property type="entry name" value="uS13_bact"/>
    <property type="match status" value="1"/>
</dbReference>
<dbReference type="PANTHER" id="PTHR10871">
    <property type="entry name" value="30S RIBOSOMAL PROTEIN S13/40S RIBOSOMAL PROTEIN S18"/>
    <property type="match status" value="1"/>
</dbReference>
<dbReference type="PANTHER" id="PTHR10871:SF1">
    <property type="entry name" value="SMALL RIBOSOMAL SUBUNIT PROTEIN US13M"/>
    <property type="match status" value="1"/>
</dbReference>
<dbReference type="Pfam" id="PF00416">
    <property type="entry name" value="Ribosomal_S13"/>
    <property type="match status" value="1"/>
</dbReference>
<dbReference type="PIRSF" id="PIRSF002134">
    <property type="entry name" value="Ribosomal_S13"/>
    <property type="match status" value="1"/>
</dbReference>
<dbReference type="SUPFAM" id="SSF46946">
    <property type="entry name" value="S13-like H2TH domain"/>
    <property type="match status" value="1"/>
</dbReference>
<dbReference type="PROSITE" id="PS00646">
    <property type="entry name" value="RIBOSOMAL_S13_1"/>
    <property type="match status" value="1"/>
</dbReference>
<dbReference type="PROSITE" id="PS50159">
    <property type="entry name" value="RIBOSOMAL_S13_2"/>
    <property type="match status" value="1"/>
</dbReference>
<evidence type="ECO:0000255" key="1">
    <source>
        <dbReference type="HAMAP-Rule" id="MF_01315"/>
    </source>
</evidence>
<evidence type="ECO:0000256" key="2">
    <source>
        <dbReference type="SAM" id="MobiDB-lite"/>
    </source>
</evidence>
<evidence type="ECO:0000305" key="3"/>
<feature type="chain" id="PRO_1000141244" description="Small ribosomal subunit protein uS13">
    <location>
        <begin position="1"/>
        <end position="123"/>
    </location>
</feature>
<feature type="region of interest" description="Disordered" evidence="2">
    <location>
        <begin position="93"/>
        <end position="123"/>
    </location>
</feature>